<reference key="1">
    <citation type="submission" date="2008-06" db="EMBL/GenBank/DDBJ databases">
        <title>Complete sequence of chromosome of Prosthecochloris aestuarii DSM 271.</title>
        <authorList>
            <consortium name="US DOE Joint Genome Institute"/>
            <person name="Lucas S."/>
            <person name="Copeland A."/>
            <person name="Lapidus A."/>
            <person name="Glavina del Rio T."/>
            <person name="Dalin E."/>
            <person name="Tice H."/>
            <person name="Bruce D."/>
            <person name="Goodwin L."/>
            <person name="Pitluck S."/>
            <person name="Schmutz J."/>
            <person name="Larimer F."/>
            <person name="Land M."/>
            <person name="Hauser L."/>
            <person name="Kyrpides N."/>
            <person name="Anderson I."/>
            <person name="Liu Z."/>
            <person name="Li T."/>
            <person name="Zhao F."/>
            <person name="Overmann J."/>
            <person name="Bryant D.A."/>
            <person name="Richardson P."/>
        </authorList>
    </citation>
    <scope>NUCLEOTIDE SEQUENCE [LARGE SCALE GENOMIC DNA]</scope>
    <source>
        <strain>DSM 271 / SK 413</strain>
    </source>
</reference>
<name>GATA_PROA2</name>
<evidence type="ECO:0000255" key="1">
    <source>
        <dbReference type="HAMAP-Rule" id="MF_00120"/>
    </source>
</evidence>
<dbReference type="EC" id="6.3.5.7" evidence="1"/>
<dbReference type="EMBL" id="CP001108">
    <property type="protein sequence ID" value="ACF45459.1"/>
    <property type="molecule type" value="Genomic_DNA"/>
</dbReference>
<dbReference type="RefSeq" id="WP_012504996.1">
    <property type="nucleotide sequence ID" value="NC_011059.1"/>
</dbReference>
<dbReference type="SMR" id="B4S4W1"/>
<dbReference type="STRING" id="290512.Paes_0402"/>
<dbReference type="KEGG" id="paa:Paes_0402"/>
<dbReference type="eggNOG" id="COG0154">
    <property type="taxonomic scope" value="Bacteria"/>
</dbReference>
<dbReference type="HOGENOM" id="CLU_009600_0_3_10"/>
<dbReference type="Proteomes" id="UP000002725">
    <property type="component" value="Chromosome"/>
</dbReference>
<dbReference type="GO" id="GO:0030956">
    <property type="term" value="C:glutamyl-tRNA(Gln) amidotransferase complex"/>
    <property type="evidence" value="ECO:0007669"/>
    <property type="project" value="InterPro"/>
</dbReference>
<dbReference type="GO" id="GO:0005524">
    <property type="term" value="F:ATP binding"/>
    <property type="evidence" value="ECO:0007669"/>
    <property type="project" value="UniProtKB-KW"/>
</dbReference>
<dbReference type="GO" id="GO:0050567">
    <property type="term" value="F:glutaminyl-tRNA synthase (glutamine-hydrolyzing) activity"/>
    <property type="evidence" value="ECO:0007669"/>
    <property type="project" value="UniProtKB-UniRule"/>
</dbReference>
<dbReference type="GO" id="GO:0006412">
    <property type="term" value="P:translation"/>
    <property type="evidence" value="ECO:0007669"/>
    <property type="project" value="UniProtKB-UniRule"/>
</dbReference>
<dbReference type="Gene3D" id="3.90.1300.10">
    <property type="entry name" value="Amidase signature (AS) domain"/>
    <property type="match status" value="1"/>
</dbReference>
<dbReference type="HAMAP" id="MF_00120">
    <property type="entry name" value="GatA"/>
    <property type="match status" value="1"/>
</dbReference>
<dbReference type="InterPro" id="IPR000120">
    <property type="entry name" value="Amidase"/>
</dbReference>
<dbReference type="InterPro" id="IPR020556">
    <property type="entry name" value="Amidase_CS"/>
</dbReference>
<dbReference type="InterPro" id="IPR023631">
    <property type="entry name" value="Amidase_dom"/>
</dbReference>
<dbReference type="InterPro" id="IPR036928">
    <property type="entry name" value="AS_sf"/>
</dbReference>
<dbReference type="InterPro" id="IPR004412">
    <property type="entry name" value="GatA"/>
</dbReference>
<dbReference type="NCBIfam" id="TIGR00132">
    <property type="entry name" value="gatA"/>
    <property type="match status" value="1"/>
</dbReference>
<dbReference type="PANTHER" id="PTHR11895:SF151">
    <property type="entry name" value="GLUTAMYL-TRNA(GLN) AMIDOTRANSFERASE SUBUNIT A"/>
    <property type="match status" value="1"/>
</dbReference>
<dbReference type="PANTHER" id="PTHR11895">
    <property type="entry name" value="TRANSAMIDASE"/>
    <property type="match status" value="1"/>
</dbReference>
<dbReference type="Pfam" id="PF01425">
    <property type="entry name" value="Amidase"/>
    <property type="match status" value="1"/>
</dbReference>
<dbReference type="SUPFAM" id="SSF75304">
    <property type="entry name" value="Amidase signature (AS) enzymes"/>
    <property type="match status" value="1"/>
</dbReference>
<dbReference type="PROSITE" id="PS00571">
    <property type="entry name" value="AMIDASES"/>
    <property type="match status" value="1"/>
</dbReference>
<proteinExistence type="inferred from homology"/>
<gene>
    <name evidence="1" type="primary">gatA</name>
    <name type="ordered locus">Paes_0402</name>
</gene>
<organism>
    <name type="scientific">Prosthecochloris aestuarii (strain DSM 271 / SK 413)</name>
    <dbReference type="NCBI Taxonomy" id="290512"/>
    <lineage>
        <taxon>Bacteria</taxon>
        <taxon>Pseudomonadati</taxon>
        <taxon>Chlorobiota</taxon>
        <taxon>Chlorobiia</taxon>
        <taxon>Chlorobiales</taxon>
        <taxon>Chlorobiaceae</taxon>
        <taxon>Prosthecochloris</taxon>
    </lineage>
</organism>
<sequence length="477" mass="51315">MQFSSYRDLREKLLAREMSCEAVVTAYLQRIEATRDRNIYISVFYDEALRQARSLDRKLDAGETPGKLFGMPMAIKDNISIEGTGLTCASKILSNYTAVYDATVIRRLKEEDAVFLGKVNMDEFAMGSSNENSSFGPVPNPYDSTKVPGGSSGGSAAAVAGDLALVALGSDTGGSVRQPAGFCNVVGLKPTYGRISRYGVVAFGSSFDQIGILSKNADDAAAVLGVIAGNDGSDATSSHNQVPDYAAEMEGVSLRGLKIGIPKEYFPESLNSDVASVIQERLDLLRSLGAEMIPITLPESDYAIAAYYILTTAEASSNLARFDGARYGYRSEKSSDLTDMYVNSRTEGFGEEVKRRIMLGTYVLSAGYYDTYYKKAQQVRRVFLNRYREALANVDVIAGPTSPFPPFGIGDKMDDPLEMYLADVFTVPASIAGIPALSVPVGFDSSGLPVGMQLIGNFFEEGKLLGTARAVQNAGKV</sequence>
<feature type="chain" id="PRO_1000095160" description="Glutamyl-tRNA(Gln) amidotransferase subunit A">
    <location>
        <begin position="1"/>
        <end position="477"/>
    </location>
</feature>
<feature type="active site" description="Charge relay system" evidence="1">
    <location>
        <position position="76"/>
    </location>
</feature>
<feature type="active site" description="Charge relay system" evidence="1">
    <location>
        <position position="151"/>
    </location>
</feature>
<feature type="active site" description="Acyl-ester intermediate" evidence="1">
    <location>
        <position position="175"/>
    </location>
</feature>
<accession>B4S4W1</accession>
<protein>
    <recommendedName>
        <fullName evidence="1">Glutamyl-tRNA(Gln) amidotransferase subunit A</fullName>
        <shortName evidence="1">Glu-ADT subunit A</shortName>
        <ecNumber evidence="1">6.3.5.7</ecNumber>
    </recommendedName>
</protein>
<comment type="function">
    <text evidence="1">Allows the formation of correctly charged Gln-tRNA(Gln) through the transamidation of misacylated Glu-tRNA(Gln) in organisms which lack glutaminyl-tRNA synthetase. The reaction takes place in the presence of glutamine and ATP through an activated gamma-phospho-Glu-tRNA(Gln).</text>
</comment>
<comment type="catalytic activity">
    <reaction evidence="1">
        <text>L-glutamyl-tRNA(Gln) + L-glutamine + ATP + H2O = L-glutaminyl-tRNA(Gln) + L-glutamate + ADP + phosphate + H(+)</text>
        <dbReference type="Rhea" id="RHEA:17521"/>
        <dbReference type="Rhea" id="RHEA-COMP:9681"/>
        <dbReference type="Rhea" id="RHEA-COMP:9684"/>
        <dbReference type="ChEBI" id="CHEBI:15377"/>
        <dbReference type="ChEBI" id="CHEBI:15378"/>
        <dbReference type="ChEBI" id="CHEBI:29985"/>
        <dbReference type="ChEBI" id="CHEBI:30616"/>
        <dbReference type="ChEBI" id="CHEBI:43474"/>
        <dbReference type="ChEBI" id="CHEBI:58359"/>
        <dbReference type="ChEBI" id="CHEBI:78520"/>
        <dbReference type="ChEBI" id="CHEBI:78521"/>
        <dbReference type="ChEBI" id="CHEBI:456216"/>
        <dbReference type="EC" id="6.3.5.7"/>
    </reaction>
</comment>
<comment type="subunit">
    <text evidence="1">Heterotrimer of A, B and C subunits.</text>
</comment>
<comment type="similarity">
    <text evidence="1">Belongs to the amidase family. GatA subfamily.</text>
</comment>
<keyword id="KW-0067">ATP-binding</keyword>
<keyword id="KW-0436">Ligase</keyword>
<keyword id="KW-0547">Nucleotide-binding</keyword>
<keyword id="KW-0648">Protein biosynthesis</keyword>